<evidence type="ECO:0000255" key="1">
    <source>
        <dbReference type="HAMAP-Rule" id="MF_00645"/>
    </source>
</evidence>
<protein>
    <recommendedName>
        <fullName evidence="1">Protein Cmaq_0360</fullName>
    </recommendedName>
</protein>
<accession>A8MBB6</accession>
<dbReference type="EMBL" id="CP000852">
    <property type="protein sequence ID" value="ABW01206.1"/>
    <property type="molecule type" value="Genomic_DNA"/>
</dbReference>
<dbReference type="RefSeq" id="WP_012185426.1">
    <property type="nucleotide sequence ID" value="NC_009954.1"/>
</dbReference>
<dbReference type="SMR" id="A8MBB6"/>
<dbReference type="STRING" id="397948.Cmaq_0360"/>
<dbReference type="GeneID" id="5708514"/>
<dbReference type="KEGG" id="cma:Cmaq_0360"/>
<dbReference type="eggNOG" id="arCOG01336">
    <property type="taxonomic scope" value="Archaea"/>
</dbReference>
<dbReference type="HOGENOM" id="CLU_095686_1_1_2"/>
<dbReference type="OrthoDB" id="25187at2157"/>
<dbReference type="Proteomes" id="UP000001137">
    <property type="component" value="Chromosome"/>
</dbReference>
<dbReference type="Gene3D" id="3.30.700.20">
    <property type="entry name" value="Hypothetical protein ph0010, domain 1"/>
    <property type="match status" value="1"/>
</dbReference>
<dbReference type="Gene3D" id="3.30.1490.150">
    <property type="entry name" value="Hypothetical protein ph0010, domain 2"/>
    <property type="match status" value="1"/>
</dbReference>
<dbReference type="HAMAP" id="MF_00645">
    <property type="entry name" value="AMMECR1"/>
    <property type="match status" value="1"/>
</dbReference>
<dbReference type="InterPro" id="IPR023473">
    <property type="entry name" value="AMMECR1"/>
</dbReference>
<dbReference type="InterPro" id="IPR036071">
    <property type="entry name" value="AMMECR1_dom_sf"/>
</dbReference>
<dbReference type="InterPro" id="IPR002733">
    <property type="entry name" value="AMMECR1_domain"/>
</dbReference>
<dbReference type="InterPro" id="IPR027485">
    <property type="entry name" value="AMMECR1_N"/>
</dbReference>
<dbReference type="InterPro" id="IPR027623">
    <property type="entry name" value="AmmeMemoSam_A"/>
</dbReference>
<dbReference type="InterPro" id="IPR023472">
    <property type="entry name" value="Uncharacterised_MJ0810"/>
</dbReference>
<dbReference type="NCBIfam" id="TIGR04335">
    <property type="entry name" value="AmmeMemoSam_A"/>
    <property type="match status" value="1"/>
</dbReference>
<dbReference type="NCBIfam" id="TIGR00296">
    <property type="entry name" value="TIGR00296 family protein"/>
    <property type="match status" value="1"/>
</dbReference>
<dbReference type="PANTHER" id="PTHR13016:SF0">
    <property type="entry name" value="AMME SYNDROME CANDIDATE GENE 1 PROTEIN"/>
    <property type="match status" value="1"/>
</dbReference>
<dbReference type="PANTHER" id="PTHR13016">
    <property type="entry name" value="AMMECR1 HOMOLOG"/>
    <property type="match status" value="1"/>
</dbReference>
<dbReference type="Pfam" id="PF01871">
    <property type="entry name" value="AMMECR1"/>
    <property type="match status" value="1"/>
</dbReference>
<dbReference type="SUPFAM" id="SSF143447">
    <property type="entry name" value="AMMECR1-like"/>
    <property type="match status" value="1"/>
</dbReference>
<dbReference type="PROSITE" id="PS51112">
    <property type="entry name" value="AMMECR1"/>
    <property type="match status" value="1"/>
</dbReference>
<proteinExistence type="inferred from homology"/>
<name>Y360_CALMQ</name>
<organism>
    <name type="scientific">Caldivirga maquilingensis (strain ATCC 700844 / DSM 13496 / JCM 10307 / IC-167)</name>
    <dbReference type="NCBI Taxonomy" id="397948"/>
    <lineage>
        <taxon>Archaea</taxon>
        <taxon>Thermoproteota</taxon>
        <taxon>Thermoprotei</taxon>
        <taxon>Thermoproteales</taxon>
        <taxon>Thermoproteaceae</taxon>
        <taxon>Caldivirga</taxon>
    </lineage>
</organism>
<sequence length="219" mass="24996">MFKPYNLEQGKFLVRLARRAVEEFIRSKRIIKPPEDTPSRLLEDNYGVFTTIETIREDGSTELRGCIGFPRGNVNTVKATINSALAAAFDDPRFAPLDVNELESVIFEVSVLSPLEEAKFNSPKELVNLVKVGVHGLVIERGMYSGLLLPQVPVEYCWDTVMFLDEACEKAYLRPECWAEKGTRVYTYEAQIFREKGPRGDVYERDLIEELKKCHLDEA</sequence>
<reference key="1">
    <citation type="submission" date="2007-10" db="EMBL/GenBank/DDBJ databases">
        <title>Complete sequence of Caldivirga maquilingensis IC-167.</title>
        <authorList>
            <consortium name="US DOE Joint Genome Institute"/>
            <person name="Copeland A."/>
            <person name="Lucas S."/>
            <person name="Lapidus A."/>
            <person name="Barry K."/>
            <person name="Glavina del Rio T."/>
            <person name="Dalin E."/>
            <person name="Tice H."/>
            <person name="Pitluck S."/>
            <person name="Saunders E."/>
            <person name="Brettin T."/>
            <person name="Bruce D."/>
            <person name="Detter J.C."/>
            <person name="Han C."/>
            <person name="Schmutz J."/>
            <person name="Larimer F."/>
            <person name="Land M."/>
            <person name="Hauser L."/>
            <person name="Kyrpides N."/>
            <person name="Ivanova N."/>
            <person name="Biddle J.F."/>
            <person name="Zhang Z."/>
            <person name="Fitz-Gibbon S.T."/>
            <person name="Lowe T.M."/>
            <person name="Saltikov C."/>
            <person name="House C.H."/>
            <person name="Richardson P."/>
        </authorList>
    </citation>
    <scope>NUCLEOTIDE SEQUENCE [LARGE SCALE GENOMIC DNA]</scope>
    <source>
        <strain>ATCC 700844 / DSM 13496 / JCM 10307 / IC-167</strain>
    </source>
</reference>
<keyword id="KW-1185">Reference proteome</keyword>
<feature type="chain" id="PRO_1000082704" description="Protein Cmaq_0360">
    <location>
        <begin position="1"/>
        <end position="219"/>
    </location>
</feature>
<feature type="domain" description="AMMECR1" evidence="1">
    <location>
        <begin position="8"/>
        <end position="204"/>
    </location>
</feature>
<gene>
    <name type="ordered locus">Cmaq_0360</name>
</gene>